<proteinExistence type="evidence at protein level"/>
<organism>
    <name type="scientific">Homo sapiens</name>
    <name type="common">Human</name>
    <dbReference type="NCBI Taxonomy" id="9606"/>
    <lineage>
        <taxon>Eukaryota</taxon>
        <taxon>Metazoa</taxon>
        <taxon>Chordata</taxon>
        <taxon>Craniata</taxon>
        <taxon>Vertebrata</taxon>
        <taxon>Euteleostomi</taxon>
        <taxon>Mammalia</taxon>
        <taxon>Eutheria</taxon>
        <taxon>Euarchontoglires</taxon>
        <taxon>Primates</taxon>
        <taxon>Haplorrhini</taxon>
        <taxon>Catarrhini</taxon>
        <taxon>Hominidae</taxon>
        <taxon>Homo</taxon>
    </lineage>
</organism>
<reference key="1">
    <citation type="journal article" date="2003" name="J. Biol. Chem.">
        <title>NEDP1, a highly conserved cysteine protease that deneddylates cullins.</title>
        <authorList>
            <person name="Mendoza H.M."/>
            <person name="Shen L.-N."/>
            <person name="Botting C."/>
            <person name="Lewis A."/>
            <person name="Chen J."/>
            <person name="Ink B."/>
            <person name="Hay R.T."/>
        </authorList>
    </citation>
    <scope>NUCLEOTIDE SEQUENCE [MRNA]</scope>
    <scope>VARIANT ALA-207</scope>
    <scope>TISSUE SPECIFICITY</scope>
    <scope>MUTAGENESIS OF CYS-163</scope>
    <scope>FUNCTION</scope>
    <source>
        <tissue>Kidney</tissue>
    </source>
</reference>
<reference key="2">
    <citation type="submission" date="2000-09" db="EMBL/GenBank/DDBJ databases">
        <title>Identification of SENP8, a novel member of the sentrin-specific protease family.</title>
        <authorList>
            <person name="Gong L."/>
            <person name="Yeh E.T.H."/>
        </authorList>
    </citation>
    <scope>NUCLEOTIDE SEQUENCE [MRNA]</scope>
    <source>
        <tissue>Placenta</tissue>
    </source>
</reference>
<reference key="3">
    <citation type="submission" date="2000-09" db="EMBL/GenBank/DDBJ databases">
        <title>Identification of FKSG8, a novel gene encoding a protein with cysteine protease activity.</title>
        <authorList>
            <person name="Wang Y.-G."/>
        </authorList>
    </citation>
    <scope>NUCLEOTIDE SEQUENCE [MRNA]</scope>
    <source>
        <tissue>Placenta</tissue>
    </source>
</reference>
<reference key="4">
    <citation type="journal article" date="2004" name="Genome Res.">
        <title>The status, quality, and expansion of the NIH full-length cDNA project: the Mammalian Gene Collection (MGC).</title>
        <authorList>
            <consortium name="The MGC Project Team"/>
        </authorList>
    </citation>
    <scope>NUCLEOTIDE SEQUENCE [LARGE SCALE MRNA]</scope>
    <scope>VARIANT ALA-207</scope>
    <source>
        <tissue>Brain</tissue>
    </source>
</reference>
<reference key="5">
    <citation type="journal article" date="2003" name="J. Biol. Chem.">
        <title>DEN1 is a dual function protease capable of processing the C-terminus of Nedd8 and deconjugating hyper-neddylated CUL1.</title>
        <authorList>
            <person name="Wu K."/>
            <person name="Yamoah K."/>
            <person name="Dolios G."/>
            <person name="Gan-Erdene T."/>
            <person name="Tan P."/>
            <person name="Chen A."/>
            <person name="Lee C.-G."/>
            <person name="Wei N."/>
            <person name="Wilkinson K.D."/>
            <person name="Wang R."/>
            <person name="Pan Z.-Q."/>
        </authorList>
    </citation>
    <scope>PROTEIN SEQUENCE OF 181-197</scope>
    <scope>INTERACTION WITH NEDD8</scope>
    <scope>IDENTIFICATION BY MASS SPECTROMETRY</scope>
    <scope>FUNCTION</scope>
</reference>
<reference key="6">
    <citation type="journal article" date="2003" name="J. Biol. Chem.">
        <title>Identification and characterization of DEN1, a deneddylase of the ULP family.</title>
        <authorList>
            <person name="Gan-Erdene T."/>
            <person name="Nagamalleswari K."/>
            <person name="Yin L."/>
            <person name="Wu K."/>
            <person name="Pan Z.-Q."/>
            <person name="Wilkinson K.D."/>
        </authorList>
    </citation>
    <scope>FUNCTION</scope>
    <scope>BIOPHYSICOCHEMICAL PROPERTIES</scope>
</reference>
<reference key="7">
    <citation type="journal article" date="2004" name="Cell">
        <title>Mdm2-mediated NEDD8 conjugation of p53 inhibits its transcriptional activity.</title>
        <authorList>
            <person name="Xirodimas D.P."/>
            <person name="Saville M.K."/>
            <person name="Bourdon J.-C."/>
            <person name="Hay R.T."/>
            <person name="Lane D.P."/>
        </authorList>
    </citation>
    <scope>FUNCTION</scope>
    <scope>MUTAGENESIS OF CYS-163</scope>
</reference>
<reference key="8">
    <citation type="journal article" date="2009" name="Anal. Chem.">
        <title>Lys-N and trypsin cover complementary parts of the phosphoproteome in a refined SCX-based approach.</title>
        <authorList>
            <person name="Gauci S."/>
            <person name="Helbig A.O."/>
            <person name="Slijper M."/>
            <person name="Krijgsveld J."/>
            <person name="Heck A.J."/>
            <person name="Mohammed S."/>
        </authorList>
    </citation>
    <scope>ACETYLATION [LARGE SCALE ANALYSIS] AT MET-1</scope>
    <scope>IDENTIFICATION BY MASS SPECTROMETRY [LARGE SCALE ANALYSIS]</scope>
</reference>
<reference key="9">
    <citation type="journal article" date="2012" name="Mol. Cell. Proteomics">
        <title>Comparative large-scale characterisation of plant vs. mammal proteins reveals similar and idiosyncratic N-alpha acetylation features.</title>
        <authorList>
            <person name="Bienvenut W.V."/>
            <person name="Sumpton D."/>
            <person name="Martinez A."/>
            <person name="Lilla S."/>
            <person name="Espagne C."/>
            <person name="Meinnel T."/>
            <person name="Giglione C."/>
        </authorList>
    </citation>
    <scope>ACETYLATION [LARGE SCALE ANALYSIS] AT MET-1</scope>
    <scope>IDENTIFICATION BY MASS SPECTROMETRY [LARGE SCALE ANALYSIS]</scope>
</reference>
<reference key="10">
    <citation type="journal article" date="2005" name="EMBO J.">
        <title>Structural basis of NEDD8 ubiquitin discrimination by the deneddylating enzyme NEDP1.</title>
        <authorList>
            <person name="Shen L.-N."/>
            <person name="Liu H."/>
            <person name="Dong C."/>
            <person name="Xirodimas D.P."/>
            <person name="Naismith J.H."/>
            <person name="Hay R.T."/>
        </authorList>
    </citation>
    <scope>X-RAY CRYSTALLOGRAPHY (1.9 ANGSTROMS) IN COMPLEX WITH NEDD8</scope>
    <scope>MUTAGENESIS OF ASP-10; TRP-26; ASP-29; VAL-58; PHE-74; PRO-77; ASN-91; HIS-102; TRP-103; ASP-119; GLN-157 AND CYS-163</scope>
    <scope>FUNCTION</scope>
</reference>
<reference key="11">
    <citation type="journal article" date="2005" name="J. Mol. Biol.">
        <title>Structure of a complex between Nedd8 and the Ulp/Senp protease family member Den1.</title>
        <authorList>
            <person name="Reverter D."/>
            <person name="Wu K."/>
            <person name="Erdene T.G."/>
            <person name="Pan Z.-Q."/>
            <person name="Wilkinson K.D."/>
            <person name="Lima C.D."/>
        </authorList>
    </citation>
    <scope>X-RAY CRYSTALLOGRAPHY (2.2 ANGSTROMS) IN COMPLEX WITH NEDD8</scope>
</reference>
<evidence type="ECO:0000269" key="1">
    <source>
    </source>
</evidence>
<evidence type="ECO:0000269" key="2">
    <source>
    </source>
</evidence>
<evidence type="ECO:0000269" key="3">
    <source>
    </source>
</evidence>
<evidence type="ECO:0000269" key="4">
    <source>
    </source>
</evidence>
<evidence type="ECO:0000269" key="5">
    <source>
    </source>
</evidence>
<evidence type="ECO:0000269" key="6">
    <source>
    </source>
</evidence>
<evidence type="ECO:0000305" key="7"/>
<evidence type="ECO:0007744" key="8">
    <source>
    </source>
</evidence>
<evidence type="ECO:0007744" key="9">
    <source>
    </source>
</evidence>
<evidence type="ECO:0007829" key="10">
    <source>
        <dbReference type="PDB" id="2BKR"/>
    </source>
</evidence>
<accession>Q96LD8</accession>
<accession>Q96QA4</accession>
<feature type="chain" id="PRO_0000101727" description="Sentrin-specific protease 8">
    <location>
        <begin position="1"/>
        <end position="212"/>
    </location>
</feature>
<feature type="region of interest" description="Protease">
    <location>
        <begin position="11"/>
        <end position="174"/>
    </location>
</feature>
<feature type="active site">
    <location>
        <position position="102"/>
    </location>
</feature>
<feature type="active site">
    <location>
        <position position="119"/>
    </location>
</feature>
<feature type="active site" description="Nucleophile">
    <location>
        <position position="163"/>
    </location>
</feature>
<feature type="modified residue" description="N-acetylmethionine" evidence="8 9">
    <location>
        <position position="1"/>
    </location>
</feature>
<feature type="sequence variant" id="VAR_023705" description="In dbSNP:rs930871." evidence="1 5">
    <original>T</original>
    <variation>A</variation>
    <location>
        <position position="207"/>
    </location>
</feature>
<feature type="mutagenesis site" description="No effect on activity." evidence="6">
    <original>D</original>
    <variation>A</variation>
    <location>
        <position position="10"/>
    </location>
</feature>
<feature type="mutagenesis site" description="Strongly reduces activity." evidence="6">
    <original>W</original>
    <variation>A</variation>
    <location>
        <position position="26"/>
    </location>
</feature>
<feature type="mutagenesis site" description="Abolishes activity." evidence="6">
    <original>D</original>
    <variation>A</variation>
    <variation>N</variation>
    <location>
        <position position="29"/>
    </location>
</feature>
<feature type="mutagenesis site" description="No effect on activity." evidence="6">
    <original>V</original>
    <variation>A</variation>
    <location>
        <position position="58"/>
    </location>
</feature>
<feature type="mutagenesis site" description="No effect on activity." evidence="6">
    <original>F</original>
    <variation>A</variation>
    <location>
        <position position="74"/>
    </location>
</feature>
<feature type="mutagenesis site" description="No effect on activity." evidence="6">
    <original>P</original>
    <variation>A</variation>
    <location>
        <position position="77"/>
    </location>
</feature>
<feature type="mutagenesis site" description="Abolishes activity." evidence="6">
    <original>N</original>
    <variation>A</variation>
    <location>
        <position position="91"/>
    </location>
</feature>
<feature type="mutagenesis site" description="Abolishes activity." evidence="6">
    <original>H</original>
    <variation>N</variation>
    <location>
        <position position="102"/>
    </location>
</feature>
<feature type="mutagenesis site" description="Strongly reduces activity." evidence="6">
    <original>W</original>
    <variation>A</variation>
    <variation>H</variation>
    <location>
        <position position="103"/>
    </location>
</feature>
<feature type="mutagenesis site" description="Abolishes activity." evidence="6">
    <original>D</original>
    <variation>A</variation>
    <variation>N</variation>
    <location>
        <position position="119"/>
    </location>
</feature>
<feature type="mutagenesis site" description="No effect on activity." evidence="6">
    <original>Q</original>
    <variation>A</variation>
    <location>
        <position position="157"/>
    </location>
</feature>
<feature type="mutagenesis site" description="Abolishes activity." evidence="1 4 6">
    <original>C</original>
    <variation>A</variation>
    <location>
        <position position="163"/>
    </location>
</feature>
<feature type="sequence conflict" description="In Ref. 3; AAL06294." evidence="7" ref="3">
    <original>R</original>
    <variation>W</variation>
    <location>
        <position position="14"/>
    </location>
</feature>
<feature type="strand" evidence="10">
    <location>
        <begin position="4"/>
        <end position="8"/>
    </location>
</feature>
<feature type="strand" evidence="10">
    <location>
        <begin position="11"/>
        <end position="14"/>
    </location>
</feature>
<feature type="helix" evidence="10">
    <location>
        <begin position="15"/>
        <end position="19"/>
    </location>
</feature>
<feature type="helix" evidence="10">
    <location>
        <begin position="29"/>
        <end position="41"/>
    </location>
</feature>
<feature type="turn" evidence="10">
    <location>
        <begin position="42"/>
        <end position="44"/>
    </location>
</feature>
<feature type="helix" evidence="10">
    <location>
        <begin position="45"/>
        <end position="47"/>
    </location>
</feature>
<feature type="turn" evidence="10">
    <location>
        <begin position="48"/>
        <end position="50"/>
    </location>
</feature>
<feature type="strand" evidence="10">
    <location>
        <begin position="51"/>
        <end position="54"/>
    </location>
</feature>
<feature type="helix" evidence="10">
    <location>
        <begin position="56"/>
        <end position="64"/>
    </location>
</feature>
<feature type="helix" evidence="10">
    <location>
        <begin position="68"/>
        <end position="75"/>
    </location>
</feature>
<feature type="helix" evidence="10">
    <location>
        <begin position="76"/>
        <end position="78"/>
    </location>
</feature>
<feature type="helix" evidence="10">
    <location>
        <begin position="80"/>
        <end position="82"/>
    </location>
</feature>
<feature type="strand" evidence="10">
    <location>
        <begin position="84"/>
        <end position="91"/>
    </location>
</feature>
<feature type="strand" evidence="10">
    <location>
        <begin position="95"/>
        <end position="99"/>
    </location>
</feature>
<feature type="strand" evidence="10">
    <location>
        <begin position="103"/>
        <end position="109"/>
    </location>
</feature>
<feature type="helix" evidence="10">
    <location>
        <begin position="110"/>
        <end position="112"/>
    </location>
</feature>
<feature type="strand" evidence="10">
    <location>
        <begin position="114"/>
        <end position="118"/>
    </location>
</feature>
<feature type="turn" evidence="10">
    <location>
        <begin position="122"/>
        <end position="125"/>
    </location>
</feature>
<feature type="helix" evidence="10">
    <location>
        <begin position="126"/>
        <end position="140"/>
    </location>
</feature>
<feature type="strand" evidence="10">
    <location>
        <begin position="149"/>
        <end position="151"/>
    </location>
</feature>
<feature type="strand" evidence="10">
    <location>
        <begin position="158"/>
        <end position="161"/>
    </location>
</feature>
<feature type="helix" evidence="10">
    <location>
        <begin position="163"/>
        <end position="179"/>
    </location>
</feature>
<feature type="helix" evidence="10">
    <location>
        <begin position="186"/>
        <end position="189"/>
    </location>
</feature>
<feature type="helix" evidence="10">
    <location>
        <begin position="192"/>
        <end position="210"/>
    </location>
</feature>
<keyword id="KW-0002">3D-structure</keyword>
<keyword id="KW-0007">Acetylation</keyword>
<keyword id="KW-0903">Direct protein sequencing</keyword>
<keyword id="KW-0378">Hydrolase</keyword>
<keyword id="KW-0645">Protease</keyword>
<keyword id="KW-1267">Proteomics identification</keyword>
<keyword id="KW-1185">Reference proteome</keyword>
<keyword id="KW-0788">Thiol protease</keyword>
<keyword id="KW-0833">Ubl conjugation pathway</keyword>
<sequence>MDPVVLSYMDSLLRQSDVSLLDPPSWLNDHIIGFAFEYFANSQFHDCSDHVSFISPEVTQFIKCTSNPAEIAMFLEPLDLPNKRVVFLAINDNSNQAAGGTHWSLLVYLQDKNSFFHYDSHSRSNSVHAKQVAEKLEAFLGRKGDKLAFVEEKAPAQQNSYDCGMYVICNTEALCQNFFRQQTESLLQLLTPAYITKKRGEWKDLITTLAKK</sequence>
<dbReference type="EC" id="3.4.22.-"/>
<dbReference type="EMBL" id="AY008293">
    <property type="protein sequence ID" value="AAG21828.1"/>
    <property type="molecule type" value="mRNA"/>
</dbReference>
<dbReference type="EMBL" id="AF308450">
    <property type="protein sequence ID" value="AAL06294.1"/>
    <property type="molecule type" value="mRNA"/>
</dbReference>
<dbReference type="EMBL" id="BC031411">
    <property type="protein sequence ID" value="AAH31411.1"/>
    <property type="molecule type" value="mRNA"/>
</dbReference>
<dbReference type="CCDS" id="CCDS10240.1"/>
<dbReference type="RefSeq" id="NP_001159812.1">
    <property type="nucleotide sequence ID" value="NM_001166340.2"/>
</dbReference>
<dbReference type="RefSeq" id="NP_001165580.1">
    <property type="nucleotide sequence ID" value="NM_001172109.1"/>
</dbReference>
<dbReference type="RefSeq" id="NP_001165581.1">
    <property type="nucleotide sequence ID" value="NM_001172110.1"/>
</dbReference>
<dbReference type="RefSeq" id="NP_001165582.1">
    <property type="nucleotide sequence ID" value="NM_001172111.2"/>
</dbReference>
<dbReference type="RefSeq" id="NP_660205.3">
    <property type="nucleotide sequence ID" value="NM_145204.3"/>
</dbReference>
<dbReference type="RefSeq" id="XP_005254214.1">
    <property type="nucleotide sequence ID" value="XM_005254157.4"/>
</dbReference>
<dbReference type="RefSeq" id="XP_011519519.1">
    <property type="nucleotide sequence ID" value="XM_011521217.3"/>
</dbReference>
<dbReference type="PDB" id="1XT9">
    <property type="method" value="X-ray"/>
    <property type="resolution" value="2.20 A"/>
    <property type="chains" value="A=1-212"/>
</dbReference>
<dbReference type="PDB" id="2BKQ">
    <property type="method" value="X-ray"/>
    <property type="resolution" value="2.00 A"/>
    <property type="chains" value="A/B/C/D=1-212"/>
</dbReference>
<dbReference type="PDB" id="2BKR">
    <property type="method" value="X-ray"/>
    <property type="resolution" value="1.90 A"/>
    <property type="chains" value="A=1-212"/>
</dbReference>
<dbReference type="PDBsum" id="1XT9"/>
<dbReference type="PDBsum" id="2BKQ"/>
<dbReference type="PDBsum" id="2BKR"/>
<dbReference type="SMR" id="Q96LD8"/>
<dbReference type="BioGRID" id="125819">
    <property type="interactions" value="30"/>
</dbReference>
<dbReference type="FunCoup" id="Q96LD8">
    <property type="interactions" value="806"/>
</dbReference>
<dbReference type="IntAct" id="Q96LD8">
    <property type="interactions" value="7"/>
</dbReference>
<dbReference type="MINT" id="Q96LD8"/>
<dbReference type="STRING" id="9606.ENSP00000340505"/>
<dbReference type="BindingDB" id="Q96LD8"/>
<dbReference type="ChEMBL" id="CHEMBL1741207"/>
<dbReference type="GuidetoPHARMACOLOGY" id="2417"/>
<dbReference type="MEROPS" id="C48.011"/>
<dbReference type="iPTMnet" id="Q96LD8"/>
<dbReference type="PhosphoSitePlus" id="Q96LD8"/>
<dbReference type="BioMuta" id="SENP8"/>
<dbReference type="DMDM" id="26006881"/>
<dbReference type="jPOST" id="Q96LD8"/>
<dbReference type="MassIVE" id="Q96LD8"/>
<dbReference type="PaxDb" id="9606-ENSP00000340505"/>
<dbReference type="PeptideAtlas" id="Q96LD8"/>
<dbReference type="ProteomicsDB" id="77207"/>
<dbReference type="Pumba" id="Q96LD8"/>
<dbReference type="Antibodypedia" id="26582">
    <property type="antibodies" value="292 antibodies from 29 providers"/>
</dbReference>
<dbReference type="DNASU" id="123228"/>
<dbReference type="Ensembl" id="ENST00000340912.6">
    <property type="protein sequence ID" value="ENSP00000340505.4"/>
    <property type="gene ID" value="ENSG00000166192.15"/>
</dbReference>
<dbReference type="Ensembl" id="ENST00000542035.2">
    <property type="protein sequence ID" value="ENSP00000446057.2"/>
    <property type="gene ID" value="ENSG00000166192.15"/>
</dbReference>
<dbReference type="GeneID" id="123228"/>
<dbReference type="KEGG" id="hsa:123228"/>
<dbReference type="MANE-Select" id="ENST00000340912.6">
    <property type="protein sequence ID" value="ENSP00000340505.4"/>
    <property type="RefSeq nucleotide sequence ID" value="NM_145204.4"/>
    <property type="RefSeq protein sequence ID" value="NP_660205.3"/>
</dbReference>
<dbReference type="UCSC" id="uc002atp.4">
    <property type="organism name" value="human"/>
</dbReference>
<dbReference type="AGR" id="HGNC:22992"/>
<dbReference type="CTD" id="123228"/>
<dbReference type="DisGeNET" id="123228"/>
<dbReference type="GeneCards" id="SENP8"/>
<dbReference type="HGNC" id="HGNC:22992">
    <property type="gene designation" value="SENP8"/>
</dbReference>
<dbReference type="HPA" id="ENSG00000166192">
    <property type="expression patterns" value="Tissue enhanced (testis)"/>
</dbReference>
<dbReference type="MIM" id="608659">
    <property type="type" value="gene"/>
</dbReference>
<dbReference type="neXtProt" id="NX_Q96LD8"/>
<dbReference type="OpenTargets" id="ENSG00000166192"/>
<dbReference type="PharmGKB" id="PA134866772"/>
<dbReference type="VEuPathDB" id="HostDB:ENSG00000166192"/>
<dbReference type="eggNOG" id="KOG3246">
    <property type="taxonomic scope" value="Eukaryota"/>
</dbReference>
<dbReference type="GeneTree" id="ENSGT00390000014038"/>
<dbReference type="HOGENOM" id="CLU_043678_3_1_1"/>
<dbReference type="InParanoid" id="Q96LD8"/>
<dbReference type="OMA" id="GFYFEYL"/>
<dbReference type="OrthoDB" id="5065855at2759"/>
<dbReference type="PAN-GO" id="Q96LD8">
    <property type="GO annotations" value="2 GO annotations based on evolutionary models"/>
</dbReference>
<dbReference type="PhylomeDB" id="Q96LD8"/>
<dbReference type="TreeFam" id="TF351057"/>
<dbReference type="PathwayCommons" id="Q96LD8"/>
<dbReference type="Reactome" id="R-HSA-5689603">
    <property type="pathway name" value="UCH proteinases"/>
</dbReference>
<dbReference type="Reactome" id="R-HSA-8951664">
    <property type="pathway name" value="Neddylation"/>
</dbReference>
<dbReference type="SignaLink" id="Q96LD8"/>
<dbReference type="BioGRID-ORCS" id="123228">
    <property type="hits" value="31 hits in 1158 CRISPR screens"/>
</dbReference>
<dbReference type="EvolutionaryTrace" id="Q96LD8"/>
<dbReference type="GeneWiki" id="SENP8"/>
<dbReference type="GenomeRNAi" id="123228"/>
<dbReference type="Pharos" id="Q96LD8">
    <property type="development level" value="Tchem"/>
</dbReference>
<dbReference type="PRO" id="PR:Q96LD8"/>
<dbReference type="Proteomes" id="UP000005640">
    <property type="component" value="Chromosome 15"/>
</dbReference>
<dbReference type="RNAct" id="Q96LD8">
    <property type="molecule type" value="protein"/>
</dbReference>
<dbReference type="Bgee" id="ENSG00000166192">
    <property type="expression patterns" value="Expressed in sperm and 125 other cell types or tissues"/>
</dbReference>
<dbReference type="ExpressionAtlas" id="Q96LD8">
    <property type="expression patterns" value="baseline and differential"/>
</dbReference>
<dbReference type="GO" id="GO:0005829">
    <property type="term" value="C:cytosol"/>
    <property type="evidence" value="ECO:0000304"/>
    <property type="project" value="Reactome"/>
</dbReference>
<dbReference type="GO" id="GO:0008234">
    <property type="term" value="F:cysteine-type peptidase activity"/>
    <property type="evidence" value="ECO:0007669"/>
    <property type="project" value="UniProtKB-KW"/>
</dbReference>
<dbReference type="GO" id="GO:0019784">
    <property type="term" value="F:deNEDDylase activity"/>
    <property type="evidence" value="ECO:0000318"/>
    <property type="project" value="GO_Central"/>
</dbReference>
<dbReference type="GO" id="GO:0043687">
    <property type="term" value="P:post-translational protein modification"/>
    <property type="evidence" value="ECO:0000304"/>
    <property type="project" value="Reactome"/>
</dbReference>
<dbReference type="GO" id="GO:0000338">
    <property type="term" value="P:protein deneddylation"/>
    <property type="evidence" value="ECO:0000318"/>
    <property type="project" value="GO_Central"/>
</dbReference>
<dbReference type="GO" id="GO:0016579">
    <property type="term" value="P:protein deubiquitination"/>
    <property type="evidence" value="ECO:0000304"/>
    <property type="project" value="Reactome"/>
</dbReference>
<dbReference type="GO" id="GO:0006508">
    <property type="term" value="P:proteolysis"/>
    <property type="evidence" value="ECO:0007669"/>
    <property type="project" value="UniProtKB-KW"/>
</dbReference>
<dbReference type="FunFam" id="3.40.395.10:FF:000003">
    <property type="entry name" value="Sentrin-specific protease 8"/>
    <property type="match status" value="1"/>
</dbReference>
<dbReference type="Gene3D" id="3.40.395.10">
    <property type="entry name" value="Adenoviral Proteinase, Chain A"/>
    <property type="match status" value="1"/>
</dbReference>
<dbReference type="InterPro" id="IPR044613">
    <property type="entry name" value="Nep1/2-like"/>
</dbReference>
<dbReference type="InterPro" id="IPR038765">
    <property type="entry name" value="Papain-like_cys_pep_sf"/>
</dbReference>
<dbReference type="InterPro" id="IPR003653">
    <property type="entry name" value="Peptidase_C48_C"/>
</dbReference>
<dbReference type="PANTHER" id="PTHR46468">
    <property type="entry name" value="SENTRIN-SPECIFIC PROTEASE 8"/>
    <property type="match status" value="1"/>
</dbReference>
<dbReference type="PANTHER" id="PTHR46468:SF1">
    <property type="entry name" value="SENTRIN-SPECIFIC PROTEASE 8"/>
    <property type="match status" value="1"/>
</dbReference>
<dbReference type="Pfam" id="PF02902">
    <property type="entry name" value="Peptidase_C48"/>
    <property type="match status" value="1"/>
</dbReference>
<dbReference type="SUPFAM" id="SSF54001">
    <property type="entry name" value="Cysteine proteinases"/>
    <property type="match status" value="1"/>
</dbReference>
<dbReference type="PROSITE" id="PS50600">
    <property type="entry name" value="ULP_PROTEASE"/>
    <property type="match status" value="1"/>
</dbReference>
<protein>
    <recommendedName>
        <fullName>Sentrin-specific protease 8</fullName>
        <ecNumber>3.4.22.-</ecNumber>
    </recommendedName>
    <alternativeName>
        <fullName>Deneddylase-1</fullName>
    </alternativeName>
    <alternativeName>
        <fullName>NEDD8-specific protease 1</fullName>
    </alternativeName>
    <alternativeName>
        <fullName>Protease, cysteine 2</fullName>
    </alternativeName>
    <alternativeName>
        <fullName>Sentrin/SUMO-specific protease SENP8</fullName>
    </alternativeName>
</protein>
<comment type="function">
    <text evidence="1 2 3 4 6">Protease that catalyzes two essential functions in the NEDD8 pathway: processing of full-length NEDD8 to its mature form and deconjugation of NEDD8 from targeted proteins such as cullins or p53.</text>
</comment>
<comment type="biophysicochemical properties">
    <kinetics>
        <KM evidence="2">51 nM for Nedd8-AMC</KM>
        <text>KM for Ub-AMC exceeds 5 uM.</text>
    </kinetics>
</comment>
<comment type="interaction">
    <interactant intactId="EBI-1041210">
        <id>Q96LD8</id>
    </interactant>
    <interactant intactId="EBI-714925">
        <id>P52757</id>
        <label>CHN2</label>
    </interactant>
    <organismsDiffer>false</organismsDiffer>
    <experiments>3</experiments>
</comment>
<comment type="tissue specificity">
    <text evidence="1">Broadly expressed, with highest levels in kidney and pancreas.</text>
</comment>
<comment type="similarity">
    <text evidence="7">Belongs to the peptidase C48 family.</text>
</comment>
<gene>
    <name type="primary">SENP8</name>
    <name type="synonym">DEN1</name>
    <name type="synonym">NEDP1</name>
    <name type="synonym">PRSC2</name>
    <name type="ORF">FKSG8</name>
</gene>
<name>SENP8_HUMAN</name>